<comment type="function">
    <text evidence="1">Binds 23S rRNA and is also seen to make contacts with the A and possibly P site tRNAs.</text>
</comment>
<comment type="subunit">
    <text evidence="1">Part of the 50S ribosomal subunit.</text>
</comment>
<comment type="similarity">
    <text evidence="1">Belongs to the universal ribosomal protein uL16 family.</text>
</comment>
<sequence length="138" mass="15568">MLSPKKVKYRKKQRGRLSGEAQKGNKISFGEYGLVSLETNFITARQIEAARIAMTRKIKRGGRVWIRIFPDIPYTKKPAETRMGKGKGGVDHWNAPVKLGTVMFEMSGVVEELAQEAMSLASSKLPVKTMFVVRRDLR</sequence>
<name>RL16_BORBZ</name>
<reference key="1">
    <citation type="journal article" date="2011" name="J. Bacteriol.">
        <title>Whole-genome sequences of thirteen isolates of Borrelia burgdorferi.</title>
        <authorList>
            <person name="Schutzer S.E."/>
            <person name="Fraser-Liggett C.M."/>
            <person name="Casjens S.R."/>
            <person name="Qiu W.G."/>
            <person name="Dunn J.J."/>
            <person name="Mongodin E.F."/>
            <person name="Luft B.J."/>
        </authorList>
    </citation>
    <scope>NUCLEOTIDE SEQUENCE [LARGE SCALE GENOMIC DNA]</scope>
    <source>
        <strain>ZS7</strain>
    </source>
</reference>
<proteinExistence type="inferred from homology"/>
<protein>
    <recommendedName>
        <fullName evidence="1">Large ribosomal subunit protein uL16</fullName>
    </recommendedName>
    <alternativeName>
        <fullName evidence="3">50S ribosomal protein L16</fullName>
    </alternativeName>
</protein>
<feature type="chain" id="PRO_1000142929" description="Large ribosomal subunit protein uL16">
    <location>
        <begin position="1"/>
        <end position="138"/>
    </location>
</feature>
<feature type="region of interest" description="Disordered" evidence="2">
    <location>
        <begin position="1"/>
        <end position="21"/>
    </location>
</feature>
<feature type="compositionally biased region" description="Basic residues" evidence="2">
    <location>
        <begin position="1"/>
        <end position="15"/>
    </location>
</feature>
<organism>
    <name type="scientific">Borreliella burgdorferi (strain ZS7)</name>
    <name type="common">Borrelia burgdorferi</name>
    <dbReference type="NCBI Taxonomy" id="445985"/>
    <lineage>
        <taxon>Bacteria</taxon>
        <taxon>Pseudomonadati</taxon>
        <taxon>Spirochaetota</taxon>
        <taxon>Spirochaetia</taxon>
        <taxon>Spirochaetales</taxon>
        <taxon>Borreliaceae</taxon>
        <taxon>Borreliella</taxon>
    </lineage>
</organism>
<gene>
    <name evidence="1" type="primary">rplP</name>
    <name type="ordered locus">BbuZS7_0496</name>
</gene>
<accession>B7J250</accession>
<keyword id="KW-0687">Ribonucleoprotein</keyword>
<keyword id="KW-0689">Ribosomal protein</keyword>
<keyword id="KW-0694">RNA-binding</keyword>
<keyword id="KW-0699">rRNA-binding</keyword>
<keyword id="KW-0820">tRNA-binding</keyword>
<dbReference type="EMBL" id="CP001205">
    <property type="protein sequence ID" value="ACK75167.1"/>
    <property type="molecule type" value="Genomic_DNA"/>
</dbReference>
<dbReference type="RefSeq" id="WP_002656214.1">
    <property type="nucleotide sequence ID" value="NC_011728.1"/>
</dbReference>
<dbReference type="SMR" id="B7J250"/>
<dbReference type="KEGG" id="bbz:BbuZS7_0496"/>
<dbReference type="HOGENOM" id="CLU_078858_2_1_12"/>
<dbReference type="Proteomes" id="UP000006901">
    <property type="component" value="Chromosome"/>
</dbReference>
<dbReference type="GO" id="GO:0022625">
    <property type="term" value="C:cytosolic large ribosomal subunit"/>
    <property type="evidence" value="ECO:0007669"/>
    <property type="project" value="TreeGrafter"/>
</dbReference>
<dbReference type="GO" id="GO:0019843">
    <property type="term" value="F:rRNA binding"/>
    <property type="evidence" value="ECO:0007669"/>
    <property type="project" value="UniProtKB-UniRule"/>
</dbReference>
<dbReference type="GO" id="GO:0003735">
    <property type="term" value="F:structural constituent of ribosome"/>
    <property type="evidence" value="ECO:0007669"/>
    <property type="project" value="InterPro"/>
</dbReference>
<dbReference type="GO" id="GO:0000049">
    <property type="term" value="F:tRNA binding"/>
    <property type="evidence" value="ECO:0007669"/>
    <property type="project" value="UniProtKB-KW"/>
</dbReference>
<dbReference type="GO" id="GO:0006412">
    <property type="term" value="P:translation"/>
    <property type="evidence" value="ECO:0007669"/>
    <property type="project" value="UniProtKB-UniRule"/>
</dbReference>
<dbReference type="CDD" id="cd01433">
    <property type="entry name" value="Ribosomal_L16_L10e"/>
    <property type="match status" value="1"/>
</dbReference>
<dbReference type="FunFam" id="3.90.1170.10:FF:000001">
    <property type="entry name" value="50S ribosomal protein L16"/>
    <property type="match status" value="1"/>
</dbReference>
<dbReference type="Gene3D" id="3.90.1170.10">
    <property type="entry name" value="Ribosomal protein L10e/L16"/>
    <property type="match status" value="1"/>
</dbReference>
<dbReference type="HAMAP" id="MF_01342">
    <property type="entry name" value="Ribosomal_uL16"/>
    <property type="match status" value="1"/>
</dbReference>
<dbReference type="InterPro" id="IPR047873">
    <property type="entry name" value="Ribosomal_uL16"/>
</dbReference>
<dbReference type="InterPro" id="IPR000114">
    <property type="entry name" value="Ribosomal_uL16_bact-type"/>
</dbReference>
<dbReference type="InterPro" id="IPR020798">
    <property type="entry name" value="Ribosomal_uL16_CS"/>
</dbReference>
<dbReference type="InterPro" id="IPR016180">
    <property type="entry name" value="Ribosomal_uL16_dom"/>
</dbReference>
<dbReference type="InterPro" id="IPR036920">
    <property type="entry name" value="Ribosomal_uL16_sf"/>
</dbReference>
<dbReference type="NCBIfam" id="TIGR01164">
    <property type="entry name" value="rplP_bact"/>
    <property type="match status" value="1"/>
</dbReference>
<dbReference type="PANTHER" id="PTHR12220">
    <property type="entry name" value="50S/60S RIBOSOMAL PROTEIN L16"/>
    <property type="match status" value="1"/>
</dbReference>
<dbReference type="PANTHER" id="PTHR12220:SF13">
    <property type="entry name" value="LARGE RIBOSOMAL SUBUNIT PROTEIN UL16M"/>
    <property type="match status" value="1"/>
</dbReference>
<dbReference type="Pfam" id="PF00252">
    <property type="entry name" value="Ribosomal_L16"/>
    <property type="match status" value="1"/>
</dbReference>
<dbReference type="PRINTS" id="PR00060">
    <property type="entry name" value="RIBOSOMALL16"/>
</dbReference>
<dbReference type="SUPFAM" id="SSF54686">
    <property type="entry name" value="Ribosomal protein L16p/L10e"/>
    <property type="match status" value="1"/>
</dbReference>
<dbReference type="PROSITE" id="PS00586">
    <property type="entry name" value="RIBOSOMAL_L16_1"/>
    <property type="match status" value="1"/>
</dbReference>
<dbReference type="PROSITE" id="PS00701">
    <property type="entry name" value="RIBOSOMAL_L16_2"/>
    <property type="match status" value="1"/>
</dbReference>
<evidence type="ECO:0000255" key="1">
    <source>
        <dbReference type="HAMAP-Rule" id="MF_01342"/>
    </source>
</evidence>
<evidence type="ECO:0000256" key="2">
    <source>
        <dbReference type="SAM" id="MobiDB-lite"/>
    </source>
</evidence>
<evidence type="ECO:0000305" key="3"/>